<keyword id="KW-1015">Disulfide bond</keyword>
<keyword id="KW-0960">Knottin</keyword>
<keyword id="KW-0528">Neurotoxin</keyword>
<keyword id="KW-0964">Secreted</keyword>
<keyword id="KW-0732">Signal</keyword>
<keyword id="KW-0800">Toxin</keyword>
<protein>
    <recommendedName>
        <fullName evidence="3">U-Asilidin(1)-Mar2a</fullName>
    </recommendedName>
</protein>
<feature type="signal peptide" evidence="1">
    <location>
        <begin position="1"/>
        <end position="24"/>
    </location>
</feature>
<feature type="peptide" id="PRO_0000448211" description="U-Asilidin(1)-Mar2a">
    <location>
        <begin position="25"/>
        <end position="57"/>
    </location>
</feature>
<feature type="disulfide bond" evidence="5">
    <location>
        <begin position="28"/>
        <end position="44"/>
    </location>
</feature>
<feature type="disulfide bond" evidence="5">
    <location>
        <begin position="35"/>
        <end position="48"/>
    </location>
</feature>
<feature type="disulfide bond" evidence="5">
    <location>
        <begin position="43"/>
        <end position="53"/>
    </location>
</feature>
<proteinExistence type="evidence at protein level"/>
<reference key="1">
    <citation type="journal article" date="2018" name="Toxins">
        <title>A Dipteran's novel sucker punch: evolution of arthropod atypical venom with a neurotoxic component in robber fliezs (Asilidae, Diptera).</title>
        <authorList>
            <person name="Drukewitz S.H."/>
            <person name="Fuhrmann N."/>
            <person name="Undheim E.A.B."/>
            <person name="Blanke A."/>
            <person name="Giribaldi J."/>
            <person name="Mary R."/>
            <person name="Laconde G."/>
            <person name="Dutertre S."/>
            <person name="von Reumont B.M."/>
        </authorList>
    </citation>
    <scope>NUCLEOTIDE SEQUENCE [MRNA]</scope>
    <scope>IDENTIFICATION BY MASS SPECTROMETRY</scope>
    <scope>SUBCELLULAR LOCATION</scope>
    <source>
        <tissue>Venom</tissue>
        <tissue>Venom gland</tissue>
    </source>
</reference>
<organism>
    <name type="scientific">Machimus arthriticus</name>
    <name type="common">Breck robberfly</name>
    <name type="synonym">Asilus arthriticus</name>
    <dbReference type="NCBI Taxonomy" id="1936065"/>
    <lineage>
        <taxon>Eukaryota</taxon>
        <taxon>Metazoa</taxon>
        <taxon>Ecdysozoa</taxon>
        <taxon>Arthropoda</taxon>
        <taxon>Hexapoda</taxon>
        <taxon>Insecta</taxon>
        <taxon>Pterygota</taxon>
        <taxon>Neoptera</taxon>
        <taxon>Endopterygota</taxon>
        <taxon>Diptera</taxon>
        <taxon>Brachycera</taxon>
        <taxon>Muscomorpha</taxon>
        <taxon>Asiloidea</taxon>
        <taxon>Asilidae</taxon>
        <taxon>Asilinae</taxon>
        <taxon>Machimus</taxon>
    </lineage>
</organism>
<name>ASI2A_MACAT</name>
<evidence type="ECO:0000255" key="1"/>
<evidence type="ECO:0000269" key="2">
    <source>
    </source>
</evidence>
<evidence type="ECO:0000303" key="3">
    <source>
    </source>
</evidence>
<evidence type="ECO:0000305" key="4"/>
<evidence type="ECO:0000305" key="5">
    <source>
    </source>
</evidence>
<accession>P0DQI9</accession>
<comment type="function">
    <text evidence="4">May act as a neurotoxin.</text>
</comment>
<comment type="subcellular location">
    <subcellularLocation>
        <location evidence="2">Secreted</location>
    </subcellularLocation>
</comment>
<comment type="tissue specificity">
    <text evidence="5">Expressed by the venom gland. Exclusively expressed in the venom thoracic glands (and not in body tissues).</text>
</comment>
<comment type="domain">
    <text evidence="5">The presence of a 'disulfide through disulfide knot' structurally defines this protein as a knottin.</text>
</comment>
<comment type="similarity">
    <text evidence="4">Belongs to the asilidin-1 family.</text>
</comment>
<comment type="online information" name="National Center for Biotechnology Information (NCBI)">
    <link uri="https://www.ncbi.nlm.nih.gov/nuccore/GFZQ00000000"/>
</comment>
<comment type="online information" name="National Center for Biotechnology Information (NCBI)">
    <link uri="https://www.ncbi.nlm.nih.gov/nuccore/GFFZ00000000"/>
</comment>
<dbReference type="SMR" id="P0DQI9"/>
<dbReference type="GO" id="GO:0005576">
    <property type="term" value="C:extracellular region"/>
    <property type="evidence" value="ECO:0007669"/>
    <property type="project" value="UniProtKB-SubCell"/>
</dbReference>
<dbReference type="GO" id="GO:0090729">
    <property type="term" value="F:toxin activity"/>
    <property type="evidence" value="ECO:0007669"/>
    <property type="project" value="UniProtKB-KW"/>
</dbReference>
<sequence length="57" mass="6588">MAPLLKLNILLLIVLICFTFHANATHRCVRHGEYCNERIRLDCCFGDCVKNKCSDDF</sequence>